<name>KCJ18_HUMAN</name>
<feature type="chain" id="PRO_0000395171" description="Inward rectifier potassium channel 18">
    <location>
        <begin position="1"/>
        <end position="433"/>
    </location>
</feature>
<feature type="topological domain" description="Cytoplasmic" evidence="1">
    <location>
        <begin position="1"/>
        <end position="77"/>
    </location>
</feature>
<feature type="transmembrane region" description="Helical; Name=M1" evidence="1">
    <location>
        <begin position="78"/>
        <end position="104"/>
    </location>
</feature>
<feature type="topological domain" description="Extracellular" evidence="1">
    <location>
        <begin position="105"/>
        <end position="129"/>
    </location>
</feature>
<feature type="intramembrane region" description="Helical; Pore-forming; Name=H5" evidence="1">
    <location>
        <begin position="130"/>
        <end position="146"/>
    </location>
</feature>
<feature type="topological domain" description="Extracellular" evidence="1">
    <location>
        <begin position="147"/>
        <end position="155"/>
    </location>
</feature>
<feature type="transmembrane region" description="Helical; Name=M2" evidence="1">
    <location>
        <begin position="156"/>
        <end position="183"/>
    </location>
</feature>
<feature type="topological domain" description="Cytoplasmic" evidence="1">
    <location>
        <begin position="184"/>
        <end position="433"/>
    </location>
</feature>
<feature type="region of interest" description="Disordered" evidence="3">
    <location>
        <begin position="387"/>
        <end position="433"/>
    </location>
</feature>
<feature type="short sequence motif" description="Selectivity filter" evidence="1">
    <location>
        <begin position="143"/>
        <end position="148"/>
    </location>
</feature>
<feature type="compositionally biased region" description="Basic and acidic residues" evidence="3">
    <location>
        <begin position="396"/>
        <end position="414"/>
    </location>
</feature>
<feature type="sequence variant" id="VAR_079830" evidence="4 8">
    <original>RR</original>
    <variation>QH</variation>
    <location>
        <begin position="39"/>
        <end position="40"/>
    </location>
</feature>
<feature type="sequence variant" id="VAR_079831" description="Found in a patient with sporadic periodic paralysis; uncertain significance; decreases potassium inward and outward currents density; reduces cell surface abundance; reduces conductance; dominant negative mutation; dbSNP:rs527236151." evidence="6">
    <original>R</original>
    <variation>C</variation>
    <location>
        <position position="43"/>
    </location>
</feature>
<feature type="sequence variant" id="VAR_079832" description="In dbSNP:rs1435508633." evidence="8">
    <original>A</original>
    <variation>E</variation>
    <location>
        <position position="56"/>
    </location>
</feature>
<feature type="sequence variant" id="VAR_079833" description="In TTPP2; abolishes potassium inward and outward currents density." evidence="7 9">
    <location>
        <begin position="126"/>
        <end position="344"/>
    </location>
</feature>
<feature type="sequence variant" id="VAR_063286" description="In TTPP2; dbSNP:rs527236152." evidence="4">
    <original>T</original>
    <variation>M</variation>
    <location>
        <position position="140"/>
    </location>
</feature>
<feature type="sequence variant" id="VAR_079834" description="In TTPP2; uncertain significance; decreases potassium inward and outward currents density; reduces cell surface abundance; reduces open propability; dominant negative mutation; dbSNP:rs527236154." evidence="6">
    <original>V</original>
    <variation>M</variation>
    <location>
        <position position="168"/>
    </location>
</feature>
<feature type="sequence variant" id="VAR_079835" description="Found in a patient with hypokalemic periodic paralysis without hyperthyroidism; reduces potassium inward and outward currents density; dbSNP:rs1311839715." evidence="9">
    <original>G</original>
    <variation>R</variation>
    <location>
        <position position="169"/>
    </location>
</feature>
<feature type="sequence variant" id="VAR_079836" description="Found in a patient with sporadic periodic paralysis; uncertain significance; abolishes potassium inward and outward currents density; reduces cell surface abundance; dbSNP:rs527236155." evidence="6">
    <original>A</original>
    <variation>P</variation>
    <location>
        <position position="200"/>
    </location>
</feature>
<feature type="sequence variant" id="VAR_063287" description="In TTPP2; hypermorphic; longer time required for half-maximal current degradation; dbSNP:rs672601244." evidence="4">
    <original>R</original>
    <variation>H</variation>
    <location>
        <position position="205"/>
    </location>
</feature>
<feature type="sequence variant" id="VAR_079837" description="In dbSNP:rs1182398045." evidence="4 8">
    <original>I</original>
    <variation>V</variation>
    <location>
        <position position="249"/>
    </location>
</feature>
<feature type="sequence variant" id="VAR_063288" description="In TTPP2; small decrease in current density; dbSNP:rs527236158." evidence="4">
    <original>T</original>
    <variation>M</variation>
    <location>
        <position position="354"/>
    </location>
</feature>
<feature type="sequence variant" id="VAR_079838" description="In TTPP2; abolishes potassium inward and outward currents density." evidence="7 9">
    <original>K</original>
    <variation>T</variation>
    <location>
        <position position="360"/>
    </location>
</feature>
<feature type="sequence variant" id="VAR_063289" description="In TTPP2; hypermorphic; longer time required for half-maximal current degradation; dbSNP:rs527236159." evidence="4">
    <original>K</original>
    <variation>R</variation>
    <location>
        <position position="366"/>
    </location>
</feature>
<feature type="sequence variant" id="VAR_079839" description="In TTPP2; reduces potassium inward and outward currents density; dbSNP:rs1960793684." evidence="7 9">
    <original>E</original>
    <variation>K</variation>
    <location>
        <position position="388"/>
    </location>
</feature>
<feature type="mutagenesis site" description="Increased expression at the cell membrane." evidence="5">
    <original>L</original>
    <variation>P</variation>
    <location>
        <position position="156"/>
    </location>
</feature>
<feature type="mutagenesis site" description="Decreases the single-channel open probability (Po) without altering its conductance." evidence="4">
    <original>T</original>
    <variation>E</variation>
    <location>
        <position position="354"/>
    </location>
</feature>
<feature type="sequence conflict" description="In Ref. 1; ACJ64506." ref="1">
    <original>R</original>
    <variation>Q</variation>
    <location>
        <position position="6"/>
    </location>
</feature>
<feature type="sequence conflict" description="In Ref. 1; ACJ64506." ref="1">
    <original>N</original>
    <variation>K</variation>
    <location>
        <position position="29"/>
    </location>
</feature>
<feature type="sequence conflict" description="In Ref. 1; ACJ64506 and 2; AMQ11134/AMQ11135." ref="1 2">
    <original>Q</original>
    <variation>H</variation>
    <location>
        <position position="192"/>
    </location>
</feature>
<feature type="sequence conflict" description="In Ref. 1; ACJ64506." ref="1">
    <original>F</original>
    <variation>L</variation>
    <location>
        <position position="281"/>
    </location>
</feature>
<feature type="sequence conflict" description="In Ref. 1; ACJ64506." ref="1">
    <original>YKIDY</original>
    <variation>FKIDH</variation>
    <location>
        <begin position="338"/>
        <end position="342"/>
    </location>
</feature>
<proteinExistence type="evidence at protein level"/>
<keyword id="KW-1003">Cell membrane</keyword>
<keyword id="KW-0225">Disease variant</keyword>
<keyword id="KW-0256">Endoplasmic reticulum</keyword>
<keyword id="KW-0407">Ion channel</keyword>
<keyword id="KW-0406">Ion transport</keyword>
<keyword id="KW-0472">Membrane</keyword>
<keyword id="KW-0597">Phosphoprotein</keyword>
<keyword id="KW-0630">Potassium</keyword>
<keyword id="KW-0633">Potassium transport</keyword>
<keyword id="KW-1185">Reference proteome</keyword>
<keyword id="KW-0812">Transmembrane</keyword>
<keyword id="KW-1133">Transmembrane helix</keyword>
<keyword id="KW-0813">Transport</keyword>
<keyword id="KW-0851">Voltage-gated channel</keyword>
<protein>
    <recommendedName>
        <fullName>Inward rectifier potassium channel 18</fullName>
    </recommendedName>
    <alternativeName>
        <fullName evidence="10">Inward rectifier K(+) channel Kir2.6</fullName>
    </alternativeName>
    <alternativeName>
        <fullName>Potassium channel, inwardly rectifying subfamily J member 18</fullName>
    </alternativeName>
</protein>
<sequence>MTAASRANPYSIVSLEEDGLHLVTMSGANGFGNGKVHTRRRCRNRFVKKNGQCNIAFANMDEKSQRYLADMFTTCVDIRWRYMLLIFSLAFLASWLLFGVIFWVIAVAHGDLEPAEGHGRTPCVMQVHGFMAAFLFSIETQTTIGYGLRCVTEECLVAVFMVVAQSIVGCIIDSFMIGAIMAKMARPKKRAQTLLFSHNAVVALRDGKLCLMWRVGNLRKSHIVEAHVRAQLIKPRVTEEGEYIPLDQIDIDVGFDKGLDRIFLVSPITILHEIDEASPLFGISRQDLETDDFEIVVILEGMVEATAMTTQARSSYLANEILWGHRFEPVLFEEKNQYKIDYSHFHKTYEVPSTPRCSAKDLVENKFLLPSANSFCYENELAFLSRDEEDEADGDQDGRSRDGLSPQARHDFDRLQAGGGVLEQRPYRRGSEI</sequence>
<gene>
    <name type="primary">KCNJ18</name>
</gene>
<accession>B7U540</accession>
<accession>A0A075B742</accession>
<accession>A0A142CKZ1</accession>
<accession>A0A142CKZ2</accession>
<dbReference type="EMBL" id="FJ434338">
    <property type="protein sequence ID" value="ACJ64506.2"/>
    <property type="molecule type" value="mRNA"/>
</dbReference>
<dbReference type="EMBL" id="KT828539">
    <property type="protein sequence ID" value="AMQ11134.1"/>
    <property type="molecule type" value="Genomic_DNA"/>
</dbReference>
<dbReference type="EMBL" id="KT828540">
    <property type="protein sequence ID" value="AMQ11135.1"/>
    <property type="molecule type" value="Genomic_DNA"/>
</dbReference>
<dbReference type="EMBL" id="AC233702">
    <property type="status" value="NOT_ANNOTATED_CDS"/>
    <property type="molecule type" value="Genomic_DNA"/>
</dbReference>
<dbReference type="CCDS" id="CCDS74015.1"/>
<dbReference type="RefSeq" id="NP_001181887.2">
    <property type="nucleotide sequence ID" value="NM_001194958.2"/>
</dbReference>
<dbReference type="SMR" id="B7U540"/>
<dbReference type="FunCoup" id="B7U540">
    <property type="interactions" value="294"/>
</dbReference>
<dbReference type="IntAct" id="B7U540">
    <property type="interactions" value="4"/>
</dbReference>
<dbReference type="STRING" id="9606.ENSP00000457807"/>
<dbReference type="iPTMnet" id="B7U540"/>
<dbReference type="PhosphoSitePlus" id="B7U540"/>
<dbReference type="BioMuta" id="KCNJ18"/>
<dbReference type="jPOST" id="B7U540"/>
<dbReference type="MassIVE" id="B7U540"/>
<dbReference type="PaxDb" id="9606-ENSP00000457807"/>
<dbReference type="PeptideAtlas" id="B7U540"/>
<dbReference type="Antibodypedia" id="73068">
    <property type="antibodies" value="46 antibodies from 6 providers"/>
</dbReference>
<dbReference type="DNASU" id="100134444"/>
<dbReference type="Ensembl" id="ENST00000567955.3">
    <property type="protein sequence ID" value="ENSP00000457807.2"/>
    <property type="gene ID" value="ENSG00000260458.3"/>
</dbReference>
<dbReference type="GeneID" id="100134444"/>
<dbReference type="KEGG" id="hsa:100134444"/>
<dbReference type="MANE-Select" id="ENST00000567955.3">
    <property type="protein sequence ID" value="ENSP00000457807.2"/>
    <property type="RefSeq nucleotide sequence ID" value="NM_001194958.2"/>
    <property type="RefSeq protein sequence ID" value="NP_001181887.2"/>
</dbReference>
<dbReference type="UCSC" id="uc032exz.1">
    <property type="organism name" value="human"/>
</dbReference>
<dbReference type="AGR" id="HGNC:39080"/>
<dbReference type="CTD" id="100134444"/>
<dbReference type="DisGeNET" id="100134444"/>
<dbReference type="GeneCards" id="KCNJ18"/>
<dbReference type="HGNC" id="HGNC:39080">
    <property type="gene designation" value="KCNJ18"/>
</dbReference>
<dbReference type="HPA" id="ENSG00000260458">
    <property type="expression patterns" value="Tissue enriched (skin)"/>
</dbReference>
<dbReference type="MalaCards" id="KCNJ18"/>
<dbReference type="MIM" id="613236">
    <property type="type" value="gene"/>
</dbReference>
<dbReference type="MIM" id="613239">
    <property type="type" value="phenotype"/>
</dbReference>
<dbReference type="neXtProt" id="NX_B7U540"/>
<dbReference type="OpenTargets" id="ENSG00000260458"/>
<dbReference type="Orphanet" id="79102">
    <property type="disease" value="Thyrotoxic periodic paralysis"/>
</dbReference>
<dbReference type="VEuPathDB" id="HostDB:ENSG00000260458"/>
<dbReference type="eggNOG" id="KOG3827">
    <property type="taxonomic scope" value="Eukaryota"/>
</dbReference>
<dbReference type="GeneTree" id="ENSGT01030000234586"/>
<dbReference type="InParanoid" id="B7U540"/>
<dbReference type="OMA" id="CNIAFAN"/>
<dbReference type="OrthoDB" id="273257at2759"/>
<dbReference type="PAN-GO" id="B7U540">
    <property type="GO annotations" value="4 GO annotations based on evolutionary models"/>
</dbReference>
<dbReference type="PhylomeDB" id="B7U540"/>
<dbReference type="PathwayCommons" id="B7U540"/>
<dbReference type="SignaLink" id="B7U540"/>
<dbReference type="BioGRID-ORCS" id="100134444">
    <property type="hits" value="8 hits in 218 CRISPR screens"/>
</dbReference>
<dbReference type="GenomeRNAi" id="100134444"/>
<dbReference type="Pharos" id="B7U540">
    <property type="development level" value="Tbio"/>
</dbReference>
<dbReference type="PRO" id="PR:B7U540"/>
<dbReference type="Proteomes" id="UP000005640">
    <property type="component" value="Chromosome 17"/>
</dbReference>
<dbReference type="RNAct" id="B7U540">
    <property type="molecule type" value="protein"/>
</dbReference>
<dbReference type="Bgee" id="ENSG00000260458">
    <property type="expression patterns" value="Expressed in skin of abdomen and 14 other cell types or tissues"/>
</dbReference>
<dbReference type="GO" id="GO:0005783">
    <property type="term" value="C:endoplasmic reticulum"/>
    <property type="evidence" value="ECO:0000314"/>
    <property type="project" value="UniProtKB"/>
</dbReference>
<dbReference type="GO" id="GO:0034702">
    <property type="term" value="C:monoatomic ion channel complex"/>
    <property type="evidence" value="ECO:0007669"/>
    <property type="project" value="UniProtKB-KW"/>
</dbReference>
<dbReference type="GO" id="GO:0005886">
    <property type="term" value="C:plasma membrane"/>
    <property type="evidence" value="ECO:0000314"/>
    <property type="project" value="UniProtKB"/>
</dbReference>
<dbReference type="GO" id="GO:0005242">
    <property type="term" value="F:inward rectifier potassium channel activity"/>
    <property type="evidence" value="ECO:0000314"/>
    <property type="project" value="UniProtKB"/>
</dbReference>
<dbReference type="GO" id="GO:1990573">
    <property type="term" value="P:potassium ion import across plasma membrane"/>
    <property type="evidence" value="ECO:0000318"/>
    <property type="project" value="GO_Central"/>
</dbReference>
<dbReference type="GO" id="GO:0034765">
    <property type="term" value="P:regulation of monoatomic ion transmembrane transport"/>
    <property type="evidence" value="ECO:0000318"/>
    <property type="project" value="GO_Central"/>
</dbReference>
<dbReference type="FunFam" id="1.10.287.70:FF:000039">
    <property type="entry name" value="ATP-sensitive inward rectifier potassium channel 12"/>
    <property type="match status" value="1"/>
</dbReference>
<dbReference type="FunFam" id="2.60.40.1400:FF:000001">
    <property type="entry name" value="G protein-activated inward rectifier potassium channel 2"/>
    <property type="match status" value="1"/>
</dbReference>
<dbReference type="Gene3D" id="1.10.287.70">
    <property type="match status" value="1"/>
</dbReference>
<dbReference type="Gene3D" id="2.60.40.1400">
    <property type="entry name" value="G protein-activated inward rectifier potassium channel 1"/>
    <property type="match status" value="1"/>
</dbReference>
<dbReference type="InterPro" id="IPR014756">
    <property type="entry name" value="Ig_E-set"/>
</dbReference>
<dbReference type="InterPro" id="IPR041647">
    <property type="entry name" value="IRK_C"/>
</dbReference>
<dbReference type="InterPro" id="IPR016449">
    <property type="entry name" value="K_chnl_inward-rec_Kir"/>
</dbReference>
<dbReference type="InterPro" id="IPR003272">
    <property type="entry name" value="K_chnl_inward-rec_Kir2.2"/>
</dbReference>
<dbReference type="InterPro" id="IPR013518">
    <property type="entry name" value="K_chnl_inward-rec_Kir_cyto"/>
</dbReference>
<dbReference type="InterPro" id="IPR013673">
    <property type="entry name" value="K_chnl_inward-rec_Kir_N"/>
</dbReference>
<dbReference type="InterPro" id="IPR040445">
    <property type="entry name" value="Kir_TM"/>
</dbReference>
<dbReference type="PANTHER" id="PTHR11767:SF14">
    <property type="entry name" value="ATP-SENSITIVE INWARD RECTIFIER POTASSIUM CHANNEL 12-RELATED"/>
    <property type="match status" value="1"/>
</dbReference>
<dbReference type="PANTHER" id="PTHR11767">
    <property type="entry name" value="INWARD RECTIFIER POTASSIUM CHANNEL"/>
    <property type="match status" value="1"/>
</dbReference>
<dbReference type="Pfam" id="PF01007">
    <property type="entry name" value="IRK"/>
    <property type="match status" value="1"/>
</dbReference>
<dbReference type="Pfam" id="PF17655">
    <property type="entry name" value="IRK_C"/>
    <property type="match status" value="1"/>
</dbReference>
<dbReference type="Pfam" id="PF08466">
    <property type="entry name" value="IRK_N"/>
    <property type="match status" value="1"/>
</dbReference>
<dbReference type="PRINTS" id="PR01325">
    <property type="entry name" value="KIR22CHANNEL"/>
</dbReference>
<dbReference type="PRINTS" id="PR01320">
    <property type="entry name" value="KIRCHANNEL"/>
</dbReference>
<dbReference type="SUPFAM" id="SSF81296">
    <property type="entry name" value="E set domains"/>
    <property type="match status" value="1"/>
</dbReference>
<dbReference type="SUPFAM" id="SSF81324">
    <property type="entry name" value="Voltage-gated potassium channels"/>
    <property type="match status" value="1"/>
</dbReference>
<evidence type="ECO:0000250" key="1">
    <source>
        <dbReference type="UniProtKB" id="F1NHE9"/>
    </source>
</evidence>
<evidence type="ECO:0000255" key="2"/>
<evidence type="ECO:0000256" key="3">
    <source>
        <dbReference type="SAM" id="MobiDB-lite"/>
    </source>
</evidence>
<evidence type="ECO:0000269" key="4">
    <source>
    </source>
</evidence>
<evidence type="ECO:0000269" key="5">
    <source>
    </source>
</evidence>
<evidence type="ECO:0000269" key="6">
    <source>
    </source>
</evidence>
<evidence type="ECO:0000269" key="7">
    <source>
    </source>
</evidence>
<evidence type="ECO:0000269" key="8">
    <source>
    </source>
</evidence>
<evidence type="ECO:0000269" key="9">
    <source>
    </source>
</evidence>
<evidence type="ECO:0000303" key="10">
    <source>
    </source>
</evidence>
<evidence type="ECO:0000305" key="11"/>
<comment type="function">
    <text evidence="4 8">Inward rectifier potassium channels are characterized by a greater tendency to allow potassium to flow into the cell rather than out of it. Their voltage dependence is regulated by the concentration of extracellular potassium; as external potassium is raised, the voltage range of the channel opening shifts to more positive voltages. The inward rectification is mainly due to the blockage of outward current by internal magnesium.</text>
</comment>
<comment type="catalytic activity">
    <reaction evidence="4 5 6">
        <text>K(+)(in) = K(+)(out)</text>
        <dbReference type="Rhea" id="RHEA:29463"/>
        <dbReference type="ChEBI" id="CHEBI:29103"/>
    </reaction>
</comment>
<comment type="subunit">
    <text evidence="5">Can form heteromeric channels with Kir2.1/KCNJ2 (PubMed:21209095). Can form heteromeric channels with Kir2.2/KCNJ12 (PubMed:21209095).</text>
</comment>
<comment type="interaction">
    <interactant intactId="EBI-19949648">
        <id>B7U540</id>
    </interactant>
    <interactant intactId="EBI-489887">
        <id>P50402</id>
        <label>EMD</label>
    </interactant>
    <organismsDiffer>false</organismsDiffer>
    <experiments>3</experiments>
</comment>
<comment type="interaction">
    <interactant intactId="EBI-19949648">
        <id>B7U540</id>
    </interactant>
    <interactant intactId="EBI-703457">
        <id>P63252</id>
        <label>KCNJ2</label>
    </interactant>
    <organismsDiffer>false</organismsDiffer>
    <experiments>4</experiments>
</comment>
<comment type="subcellular location">
    <subcellularLocation>
        <location evidence="5 6">Cell membrane</location>
        <topology evidence="2">Multi-pass membrane protein</topology>
    </subcellularLocation>
    <subcellularLocation>
        <location evidence="5">Endoplasmic reticulum</location>
    </subcellularLocation>
</comment>
<comment type="tissue specificity">
    <text evidence="4">Specifically expressed in skeletal muscle.</text>
</comment>
<comment type="induction">
    <text evidence="4">Up-regulated by triiodothyronine.</text>
</comment>
<comment type="PTM">
    <text evidence="4">Probably phosphorylated by PKC; decreases single-channel open probability.</text>
</comment>
<comment type="disease" evidence="4 6 7 9">
    <disease id="DI-02615">
        <name>Thyrotoxic periodic paralysis 2</name>
        <acronym>TTPP2</acronym>
        <description>A sporadic muscular disorder characterized by episodic weakness and hypokalemia during a thyrotoxic state. It is clinically similar to hereditary hypokalemic periodic paralysis, except for the fact that hyperthyroidism is an absolute requirement for disease manifestation. The disease presents with recurrent episodes of acute muscular weakness of the four extremities that vary in severity from paresis to complete paralysis. Attacks are triggered by ingestion of a high carbohydrate load or strenuous physical activity followed by a period of rest. Thyrotoxic periodic paralysis can occur in association with any cause of hyperthyroidism, but is most commonly associated with Graves disease.</description>
        <dbReference type="MIM" id="613239"/>
    </disease>
    <text>Disease susceptibility is associated with variants affecting the gene represented in this entry.</text>
</comment>
<comment type="similarity">
    <text evidence="11">Belongs to the inward rectifier-type potassium channel (TC 1.A.2.1) family. KCNJ12 subfamily.</text>
</comment>
<reference key="1">
    <citation type="journal article" date="2010" name="Cell">
        <title>Mutations in potassium channel Kir2.6 cause susceptibility to thyrotoxic hypokalemic periodic paralysis.</title>
        <authorList>
            <person name="Ryan D.P."/>
            <person name="da Silva M.R."/>
            <person name="Soong T.W."/>
            <person name="Fontaine B."/>
            <person name="Donaldson M.R."/>
            <person name="Kung A.W."/>
            <person name="Jongjaroenprasert W."/>
            <person name="Liang M.C."/>
            <person name="Khoo D.H."/>
            <person name="Cheah J.S."/>
            <person name="Ho S.C."/>
            <person name="Bernstein H.S."/>
            <person name="Maciel R.M."/>
            <person name="Brown R.H. Jr."/>
            <person name="Ptacek L.J."/>
        </authorList>
    </citation>
    <scope>NUCLEOTIDE SEQUENCE [MRNA]</scope>
    <scope>FUNCTION</scope>
    <scope>TRANSPORTER ACTIVITY</scope>
    <scope>INDUCTION BY TRIIODOTHYRONINE</scope>
    <scope>TISSUE SPECIFICITY</scope>
    <scope>PHOSPHORYLATION</scope>
    <scope>VARIANTS TTPP2 MET-140; HIS-205; MET-354 AND ARG-366</scope>
    <scope>CHARACTERIZATION OF VARIANTS TTPP2 HIS-205; MET-354 AND ARG-366</scope>
    <scope>MUTAGENESIS OF THR-354</scope>
    <scope>VARIANTS 39-ARG-ARG-40 DELINS GLN-HIS AND VAL-249</scope>
    <source>
        <tissue>Brain</tissue>
    </source>
</reference>
<reference key="2">
    <citation type="journal article" date="2016" name="Mol. Genet. Genomics">
        <title>Whole genome and exome sequencing realignment supports the assignment of KCNJ12, KCNJ17, and KCNJ18 paralogous genes in thyrotoxic periodic paralysis locus: functional characterization of two polymorphic Kir2.6 isoforms.</title>
        <authorList>
            <person name="Paninka R.M."/>
            <person name="Mazzotti D.R."/>
            <person name="Kizys M.M."/>
            <person name="Vidi A.C."/>
            <person name="Rodrigues H."/>
            <person name="Silva S.P."/>
            <person name="Kunii I.S."/>
            <person name="Furuzawa G.K."/>
            <person name="Arcisio-Miranda M."/>
            <person name="Dias-da-Silva M.R."/>
        </authorList>
    </citation>
    <scope>NUCLEOTIDE SEQUENCE [GENOMIC DNA]</scope>
    <scope>VARIANTS 39-ARG-ARG-40 DELINS GLN-HIS; GLU-56 AND VAL-249</scope>
    <scope>FUNCTION</scope>
</reference>
<reference key="3">
    <citation type="journal article" date="2006" name="Nature">
        <title>DNA sequence of human chromosome 17 and analysis of rearrangement in the human lineage.</title>
        <authorList>
            <person name="Zody M.C."/>
            <person name="Garber M."/>
            <person name="Adams D.J."/>
            <person name="Sharpe T."/>
            <person name="Harrow J."/>
            <person name="Lupski J.R."/>
            <person name="Nicholson C."/>
            <person name="Searle S.M."/>
            <person name="Wilming L."/>
            <person name="Young S.K."/>
            <person name="Abouelleil A."/>
            <person name="Allen N.R."/>
            <person name="Bi W."/>
            <person name="Bloom T."/>
            <person name="Borowsky M.L."/>
            <person name="Bugalter B.E."/>
            <person name="Butler J."/>
            <person name="Chang J.L."/>
            <person name="Chen C.-K."/>
            <person name="Cook A."/>
            <person name="Corum B."/>
            <person name="Cuomo C.A."/>
            <person name="de Jong P.J."/>
            <person name="DeCaprio D."/>
            <person name="Dewar K."/>
            <person name="FitzGerald M."/>
            <person name="Gilbert J."/>
            <person name="Gibson R."/>
            <person name="Gnerre S."/>
            <person name="Goldstein S."/>
            <person name="Grafham D.V."/>
            <person name="Grocock R."/>
            <person name="Hafez N."/>
            <person name="Hagopian D.S."/>
            <person name="Hart E."/>
            <person name="Norman C.H."/>
            <person name="Humphray S."/>
            <person name="Jaffe D.B."/>
            <person name="Jones M."/>
            <person name="Kamal M."/>
            <person name="Khodiyar V.K."/>
            <person name="LaButti K."/>
            <person name="Laird G."/>
            <person name="Lehoczky J."/>
            <person name="Liu X."/>
            <person name="Lokyitsang T."/>
            <person name="Loveland J."/>
            <person name="Lui A."/>
            <person name="Macdonald P."/>
            <person name="Major J.E."/>
            <person name="Matthews L."/>
            <person name="Mauceli E."/>
            <person name="McCarroll S.A."/>
            <person name="Mihalev A.H."/>
            <person name="Mudge J."/>
            <person name="Nguyen C."/>
            <person name="Nicol R."/>
            <person name="O'Leary S.B."/>
            <person name="Osoegawa K."/>
            <person name="Schwartz D.C."/>
            <person name="Shaw-Smith C."/>
            <person name="Stankiewicz P."/>
            <person name="Steward C."/>
            <person name="Swarbreck D."/>
            <person name="Venkataraman V."/>
            <person name="Whittaker C.A."/>
            <person name="Yang X."/>
            <person name="Zimmer A.R."/>
            <person name="Bradley A."/>
            <person name="Hubbard T."/>
            <person name="Birren B.W."/>
            <person name="Rogers J."/>
            <person name="Lander E.S."/>
            <person name="Nusbaum C."/>
        </authorList>
    </citation>
    <scope>NUCLEOTIDE SEQUENCE [LARGE SCALE GENOMIC DNA]</scope>
</reference>
<reference key="4">
    <citation type="journal article" date="2011" name="J. Biol. Chem.">
        <title>Kir2.6 regulates the surface expression of Kir2.x inward rectifier potassium channels.</title>
        <authorList>
            <person name="Dassau L."/>
            <person name="Conti L.R."/>
            <person name="Radeke C.M."/>
            <person name="Ptacek L.J."/>
            <person name="Vandenberg C.A."/>
        </authorList>
    </citation>
    <scope>SUBCELLULAR LOCATION</scope>
    <scope>TRANSPORTER ACTIVITY</scope>
    <scope>SUBUNIT</scope>
    <scope>MUTAGENESIS OF LEU-156</scope>
</reference>
<reference key="5">
    <citation type="journal article" date="2011" name="J. Biol. Chem.">
        <title>Identification and functional characterization of Kir2.6 mutations associated with non-familial hypokalemic periodic paralysis.</title>
        <authorList>
            <person name="Cheng C.J."/>
            <person name="Lin S.H."/>
            <person name="Lo Y.F."/>
            <person name="Yang S.S."/>
            <person name="Hsu Y.J."/>
            <person name="Cannon S.C."/>
            <person name="Huang C.L."/>
        </authorList>
    </citation>
    <scope>VARIANT TTPP2 MET-168</scope>
    <scope>CHARACTERIZATION OF VARIANT TTPP2 MET-168</scope>
    <scope>VARIANTS CYS-43 AND PRO-200</scope>
    <scope>CHARACTERIZATION OF VARIANTS CYS-43 AND PRO-200</scope>
    <scope>TRANSPORTER ACTIVITY</scope>
    <scope>SUBCELLULAR LOCATION</scope>
</reference>
<reference key="6">
    <citation type="journal article" date="2015" name="BMC Neurol.">
        <title>The clinical and genetic features in a cohort of mainland Chinese patients with thyrotoxic periodic paralysis.</title>
        <authorList>
            <person name="Li X."/>
            <person name="Yao S."/>
            <person name="Xiang Y."/>
            <person name="Zhang X."/>
            <person name="Wu X."/>
            <person name="Luo L."/>
            <person name="Huang H."/>
            <person name="Zhu M."/>
            <person name="Wan H."/>
            <person name="Hong D."/>
        </authorList>
    </citation>
    <scope>VARIANTS TTPP2 126-GLN--HIS-344 DEL; THR-360 AND LYS-388</scope>
</reference>
<reference key="7">
    <citation type="journal article" date="2016" name="Clin. Neurophysiol.">
        <title>A novel Kir2.6 mutation associated with hypokalemic periodic paralysis.</title>
        <authorList>
            <person name="Zheng J."/>
            <person name="Liang Z."/>
            <person name="Hou Y."/>
            <person name="Liu F."/>
            <person name="Hu Y."/>
            <person name="Lin P."/>
            <person name="Yan C."/>
        </authorList>
    </citation>
    <scope>VARIANT ARG-169</scope>
    <scope>CHARACTERIZATION OF VARIANT ARG-169</scope>
    <scope>CHARACTERIZATION OF VARIANTS TTPP2 126-GLN--HIS-344 DEL; THR-360 AND LYS-388</scope>
</reference>
<organism>
    <name type="scientific">Homo sapiens</name>
    <name type="common">Human</name>
    <dbReference type="NCBI Taxonomy" id="9606"/>
    <lineage>
        <taxon>Eukaryota</taxon>
        <taxon>Metazoa</taxon>
        <taxon>Chordata</taxon>
        <taxon>Craniata</taxon>
        <taxon>Vertebrata</taxon>
        <taxon>Euteleostomi</taxon>
        <taxon>Mammalia</taxon>
        <taxon>Eutheria</taxon>
        <taxon>Euarchontoglires</taxon>
        <taxon>Primates</taxon>
        <taxon>Haplorrhini</taxon>
        <taxon>Catarrhini</taxon>
        <taxon>Hominidae</taxon>
        <taxon>Homo</taxon>
    </lineage>
</organism>